<reference key="1">
    <citation type="journal article" date="2005" name="Proc. Natl. Acad. Sci. U.S.A.">
        <title>Whole genome sequence of Staphylococcus saprophyticus reveals the pathogenesis of uncomplicated urinary tract infection.</title>
        <authorList>
            <person name="Kuroda M."/>
            <person name="Yamashita A."/>
            <person name="Hirakawa H."/>
            <person name="Kumano M."/>
            <person name="Morikawa K."/>
            <person name="Higashide M."/>
            <person name="Maruyama A."/>
            <person name="Inose Y."/>
            <person name="Matoba K."/>
            <person name="Toh H."/>
            <person name="Kuhara S."/>
            <person name="Hattori M."/>
            <person name="Ohta T."/>
        </authorList>
    </citation>
    <scope>NUCLEOTIDE SEQUENCE [LARGE SCALE GENOMIC DNA]</scope>
    <source>
        <strain>ATCC 15305 / DSM 20229 / NCIMB 8711 / NCTC 7292 / S-41</strain>
    </source>
</reference>
<proteinExistence type="inferred from homology"/>
<evidence type="ECO:0000255" key="1">
    <source>
        <dbReference type="PROSITE-ProRule" id="PRU00608"/>
    </source>
</evidence>
<evidence type="ECO:0000305" key="2"/>
<keyword id="KW-1185">Reference proteome</keyword>
<comment type="similarity">
    <text evidence="2">Belongs to the peptidase C56 family.</text>
</comment>
<gene>
    <name type="ordered locus">SSP0918</name>
</gene>
<dbReference type="EMBL" id="AP008934">
    <property type="protein sequence ID" value="BAE18063.1"/>
    <property type="molecule type" value="Genomic_DNA"/>
</dbReference>
<dbReference type="RefSeq" id="WP_011302786.1">
    <property type="nucleotide sequence ID" value="NZ_MTGA01000031.1"/>
</dbReference>
<dbReference type="SMR" id="Q49YS0"/>
<dbReference type="MEROPS" id="C56.001"/>
<dbReference type="GeneID" id="3616821"/>
<dbReference type="KEGG" id="ssp:SSP0918"/>
<dbReference type="PATRIC" id="fig|342451.11.peg.917"/>
<dbReference type="eggNOG" id="COG0693">
    <property type="taxonomic scope" value="Bacteria"/>
</dbReference>
<dbReference type="HOGENOM" id="CLU_000445_44_4_9"/>
<dbReference type="OrthoDB" id="9792284at2"/>
<dbReference type="Proteomes" id="UP000006371">
    <property type="component" value="Chromosome"/>
</dbReference>
<dbReference type="CDD" id="cd03134">
    <property type="entry name" value="GATase1_PfpI_like"/>
    <property type="match status" value="1"/>
</dbReference>
<dbReference type="Gene3D" id="3.40.50.880">
    <property type="match status" value="1"/>
</dbReference>
<dbReference type="InterPro" id="IPR006286">
    <property type="entry name" value="C56_PfpI-like"/>
</dbReference>
<dbReference type="InterPro" id="IPR029062">
    <property type="entry name" value="Class_I_gatase-like"/>
</dbReference>
<dbReference type="InterPro" id="IPR002818">
    <property type="entry name" value="DJ-1/PfpI"/>
</dbReference>
<dbReference type="NCBIfam" id="TIGR01382">
    <property type="entry name" value="PfpI"/>
    <property type="match status" value="1"/>
</dbReference>
<dbReference type="PANTHER" id="PTHR42733">
    <property type="entry name" value="DJ-1 PROTEIN"/>
    <property type="match status" value="1"/>
</dbReference>
<dbReference type="PANTHER" id="PTHR42733:SF2">
    <property type="entry name" value="DJ-1_THIJ_PFPI FAMILY PROTEIN"/>
    <property type="match status" value="1"/>
</dbReference>
<dbReference type="Pfam" id="PF01965">
    <property type="entry name" value="DJ-1_PfpI"/>
    <property type="match status" value="1"/>
</dbReference>
<dbReference type="SUPFAM" id="SSF52317">
    <property type="entry name" value="Class I glutamine amidotransferase-like"/>
    <property type="match status" value="1"/>
</dbReference>
<dbReference type="PROSITE" id="PS51276">
    <property type="entry name" value="PEPTIDASE_C56_PFPI"/>
    <property type="match status" value="1"/>
</dbReference>
<sequence>MAKKVAIILTNEFEDIELTSPKEAIEEAGHETVVIGDQANSEVVGKHGTKVAVDVSIADAKPEDFDGLLIPGGFSPDHLRGDAEGRYGTFAKYFTKNDVPAFAICHGPQILIDTDDLNGRTLTAVLNVRKDLANAGAQVVDESVVVDKNIVTSRTPDDLDDFNREIVNQLND</sequence>
<name>Y918_STAS1</name>
<accession>Q49YS0</accession>
<protein>
    <recommendedName>
        <fullName>Uncharacterized protein SSP0918</fullName>
    </recommendedName>
</protein>
<organism>
    <name type="scientific">Staphylococcus saprophyticus subsp. saprophyticus (strain ATCC 15305 / DSM 20229 / NCIMB 8711 / NCTC 7292 / S-41)</name>
    <dbReference type="NCBI Taxonomy" id="342451"/>
    <lineage>
        <taxon>Bacteria</taxon>
        <taxon>Bacillati</taxon>
        <taxon>Bacillota</taxon>
        <taxon>Bacilli</taxon>
        <taxon>Bacillales</taxon>
        <taxon>Staphylococcaceae</taxon>
        <taxon>Staphylococcus</taxon>
    </lineage>
</organism>
<feature type="chain" id="PRO_0000157844" description="Uncharacterized protein SSP0918">
    <location>
        <begin position="1"/>
        <end position="172"/>
    </location>
</feature>
<feature type="domain" description="PfpI endopeptidase" evidence="1">
    <location>
        <begin position="3"/>
        <end position="171"/>
    </location>
</feature>